<dbReference type="EC" id="1.2.1.70" evidence="1"/>
<dbReference type="EMBL" id="CP000153">
    <property type="protein sequence ID" value="ABB44137.1"/>
    <property type="molecule type" value="Genomic_DNA"/>
</dbReference>
<dbReference type="RefSeq" id="WP_011372489.1">
    <property type="nucleotide sequence ID" value="NC_007575.1"/>
</dbReference>
<dbReference type="SMR" id="Q30S94"/>
<dbReference type="STRING" id="326298.Suden_0859"/>
<dbReference type="KEGG" id="tdn:Suden_0859"/>
<dbReference type="eggNOG" id="COG0373">
    <property type="taxonomic scope" value="Bacteria"/>
</dbReference>
<dbReference type="HOGENOM" id="CLU_035113_2_2_7"/>
<dbReference type="OrthoDB" id="110209at2"/>
<dbReference type="UniPathway" id="UPA00251">
    <property type="reaction ID" value="UER00316"/>
</dbReference>
<dbReference type="Proteomes" id="UP000002714">
    <property type="component" value="Chromosome"/>
</dbReference>
<dbReference type="GO" id="GO:0008883">
    <property type="term" value="F:glutamyl-tRNA reductase activity"/>
    <property type="evidence" value="ECO:0007669"/>
    <property type="project" value="UniProtKB-UniRule"/>
</dbReference>
<dbReference type="GO" id="GO:0050661">
    <property type="term" value="F:NADP binding"/>
    <property type="evidence" value="ECO:0007669"/>
    <property type="project" value="InterPro"/>
</dbReference>
<dbReference type="GO" id="GO:0019353">
    <property type="term" value="P:protoporphyrinogen IX biosynthetic process from glutamate"/>
    <property type="evidence" value="ECO:0007669"/>
    <property type="project" value="TreeGrafter"/>
</dbReference>
<dbReference type="CDD" id="cd05213">
    <property type="entry name" value="NAD_bind_Glutamyl_tRNA_reduct"/>
    <property type="match status" value="1"/>
</dbReference>
<dbReference type="FunFam" id="3.30.460.30:FF:000001">
    <property type="entry name" value="Glutamyl-tRNA reductase"/>
    <property type="match status" value="1"/>
</dbReference>
<dbReference type="Gene3D" id="3.30.460.30">
    <property type="entry name" value="Glutamyl-tRNA reductase, N-terminal domain"/>
    <property type="match status" value="1"/>
</dbReference>
<dbReference type="Gene3D" id="3.40.50.720">
    <property type="entry name" value="NAD(P)-binding Rossmann-like Domain"/>
    <property type="match status" value="1"/>
</dbReference>
<dbReference type="HAMAP" id="MF_00087">
    <property type="entry name" value="Glu_tRNA_reductase"/>
    <property type="match status" value="1"/>
</dbReference>
<dbReference type="InterPro" id="IPR000343">
    <property type="entry name" value="4pyrrol_synth_GluRdtase"/>
</dbReference>
<dbReference type="InterPro" id="IPR015896">
    <property type="entry name" value="4pyrrol_synth_GluRdtase_dimer"/>
</dbReference>
<dbReference type="InterPro" id="IPR015895">
    <property type="entry name" value="4pyrrol_synth_GluRdtase_N"/>
</dbReference>
<dbReference type="InterPro" id="IPR018214">
    <property type="entry name" value="GluRdtase_CS"/>
</dbReference>
<dbReference type="InterPro" id="IPR036453">
    <property type="entry name" value="GluRdtase_dimer_dom_sf"/>
</dbReference>
<dbReference type="InterPro" id="IPR036343">
    <property type="entry name" value="GluRdtase_N_sf"/>
</dbReference>
<dbReference type="InterPro" id="IPR036291">
    <property type="entry name" value="NAD(P)-bd_dom_sf"/>
</dbReference>
<dbReference type="InterPro" id="IPR006151">
    <property type="entry name" value="Shikm_DH/Glu-tRNA_Rdtase"/>
</dbReference>
<dbReference type="NCBIfam" id="TIGR01035">
    <property type="entry name" value="hemA"/>
    <property type="match status" value="1"/>
</dbReference>
<dbReference type="PANTHER" id="PTHR43013">
    <property type="entry name" value="GLUTAMYL-TRNA REDUCTASE"/>
    <property type="match status" value="1"/>
</dbReference>
<dbReference type="PANTHER" id="PTHR43013:SF1">
    <property type="entry name" value="GLUTAMYL-TRNA REDUCTASE"/>
    <property type="match status" value="1"/>
</dbReference>
<dbReference type="Pfam" id="PF00745">
    <property type="entry name" value="GlutR_dimer"/>
    <property type="match status" value="1"/>
</dbReference>
<dbReference type="Pfam" id="PF05201">
    <property type="entry name" value="GlutR_N"/>
    <property type="match status" value="1"/>
</dbReference>
<dbReference type="Pfam" id="PF01488">
    <property type="entry name" value="Shikimate_DH"/>
    <property type="match status" value="1"/>
</dbReference>
<dbReference type="PIRSF" id="PIRSF000445">
    <property type="entry name" value="4pyrrol_synth_GluRdtase"/>
    <property type="match status" value="1"/>
</dbReference>
<dbReference type="SUPFAM" id="SSF69742">
    <property type="entry name" value="Glutamyl tRNA-reductase catalytic, N-terminal domain"/>
    <property type="match status" value="1"/>
</dbReference>
<dbReference type="SUPFAM" id="SSF69075">
    <property type="entry name" value="Glutamyl tRNA-reductase dimerization domain"/>
    <property type="match status" value="1"/>
</dbReference>
<dbReference type="SUPFAM" id="SSF51735">
    <property type="entry name" value="NAD(P)-binding Rossmann-fold domains"/>
    <property type="match status" value="1"/>
</dbReference>
<dbReference type="PROSITE" id="PS00747">
    <property type="entry name" value="GLUTR"/>
    <property type="match status" value="1"/>
</dbReference>
<accession>Q30S94</accession>
<feature type="chain" id="PRO_1000071250" description="Glutamyl-tRNA reductase">
    <location>
        <begin position="1"/>
        <end position="432"/>
    </location>
</feature>
<feature type="active site" description="Nucleophile" evidence="1">
    <location>
        <position position="51"/>
    </location>
</feature>
<feature type="binding site" evidence="1">
    <location>
        <begin position="50"/>
        <end position="53"/>
    </location>
    <ligand>
        <name>substrate</name>
    </ligand>
</feature>
<feature type="binding site" evidence="1">
    <location>
        <position position="110"/>
    </location>
    <ligand>
        <name>substrate</name>
    </ligand>
</feature>
<feature type="binding site" evidence="1">
    <location>
        <begin position="115"/>
        <end position="117"/>
    </location>
    <ligand>
        <name>substrate</name>
    </ligand>
</feature>
<feature type="binding site" evidence="1">
    <location>
        <position position="121"/>
    </location>
    <ligand>
        <name>substrate</name>
    </ligand>
</feature>
<feature type="binding site" evidence="1">
    <location>
        <begin position="190"/>
        <end position="195"/>
    </location>
    <ligand>
        <name>NADP(+)</name>
        <dbReference type="ChEBI" id="CHEBI:58349"/>
    </ligand>
</feature>
<feature type="site" description="Important for activity" evidence="1">
    <location>
        <position position="100"/>
    </location>
</feature>
<keyword id="KW-0521">NADP</keyword>
<keyword id="KW-0560">Oxidoreductase</keyword>
<keyword id="KW-0627">Porphyrin biosynthesis</keyword>
<keyword id="KW-1185">Reference proteome</keyword>
<proteinExistence type="inferred from homology"/>
<comment type="function">
    <text evidence="1">Catalyzes the NADPH-dependent reduction of glutamyl-tRNA(Glu) to glutamate 1-semialdehyde (GSA).</text>
</comment>
<comment type="catalytic activity">
    <reaction evidence="1">
        <text>(S)-4-amino-5-oxopentanoate + tRNA(Glu) + NADP(+) = L-glutamyl-tRNA(Glu) + NADPH + H(+)</text>
        <dbReference type="Rhea" id="RHEA:12344"/>
        <dbReference type="Rhea" id="RHEA-COMP:9663"/>
        <dbReference type="Rhea" id="RHEA-COMP:9680"/>
        <dbReference type="ChEBI" id="CHEBI:15378"/>
        <dbReference type="ChEBI" id="CHEBI:57501"/>
        <dbReference type="ChEBI" id="CHEBI:57783"/>
        <dbReference type="ChEBI" id="CHEBI:58349"/>
        <dbReference type="ChEBI" id="CHEBI:78442"/>
        <dbReference type="ChEBI" id="CHEBI:78520"/>
        <dbReference type="EC" id="1.2.1.70"/>
    </reaction>
</comment>
<comment type="pathway">
    <text evidence="1">Porphyrin-containing compound metabolism; protoporphyrin-IX biosynthesis; 5-aminolevulinate from L-glutamyl-tRNA(Glu): step 1/2.</text>
</comment>
<comment type="subunit">
    <text evidence="1">Homodimer.</text>
</comment>
<comment type="domain">
    <text evidence="1">Possesses an unusual extended V-shaped dimeric structure with each monomer consisting of three distinct domains arranged along a curved 'spinal' alpha-helix. The N-terminal catalytic domain specifically recognizes the glutamate moiety of the substrate. The second domain is the NADPH-binding domain, and the third C-terminal domain is responsible for dimerization.</text>
</comment>
<comment type="miscellaneous">
    <text evidence="1">During catalysis, the active site Cys acts as a nucleophile attacking the alpha-carbonyl group of tRNA-bound glutamate with the formation of a thioester intermediate between enzyme and glutamate, and the concomitant release of tRNA(Glu). The thioester intermediate is finally reduced by direct hydride transfer from NADPH, to form the product GSA.</text>
</comment>
<comment type="similarity">
    <text evidence="1">Belongs to the glutamyl-tRNA reductase family.</text>
</comment>
<reference key="1">
    <citation type="journal article" date="2008" name="Appl. Environ. Microbiol.">
        <title>Genome of the epsilonproteobacterial chemolithoautotroph Sulfurimonas denitrificans.</title>
        <authorList>
            <person name="Sievert S.M."/>
            <person name="Scott K.M."/>
            <person name="Klotz M.G."/>
            <person name="Chain P.S.G."/>
            <person name="Hauser L.J."/>
            <person name="Hemp J."/>
            <person name="Huegler M."/>
            <person name="Land M."/>
            <person name="Lapidus A."/>
            <person name="Larimer F.W."/>
            <person name="Lucas S."/>
            <person name="Malfatti S.A."/>
            <person name="Meyer F."/>
            <person name="Paulsen I.T."/>
            <person name="Ren Q."/>
            <person name="Simon J."/>
            <person name="Bailey K."/>
            <person name="Diaz E."/>
            <person name="Fitzpatrick K.A."/>
            <person name="Glover B."/>
            <person name="Gwatney N."/>
            <person name="Korajkic A."/>
            <person name="Long A."/>
            <person name="Mobberley J.M."/>
            <person name="Pantry S.N."/>
            <person name="Pazder G."/>
            <person name="Peterson S."/>
            <person name="Quintanilla J.D."/>
            <person name="Sprinkle R."/>
            <person name="Stephens J."/>
            <person name="Thomas P."/>
            <person name="Vaughn R."/>
            <person name="Weber M.J."/>
            <person name="Wooten L.L."/>
        </authorList>
    </citation>
    <scope>NUCLEOTIDE SEQUENCE [LARGE SCALE GENOMIC DNA]</scope>
    <source>
        <strain>ATCC 33889 / DSM 1251</strain>
    </source>
</reference>
<name>HEM1_SULDN</name>
<evidence type="ECO:0000255" key="1">
    <source>
        <dbReference type="HAMAP-Rule" id="MF_00087"/>
    </source>
</evidence>
<gene>
    <name evidence="1" type="primary">hemA</name>
    <name type="ordered locus">Suden_0859</name>
</gene>
<protein>
    <recommendedName>
        <fullName evidence="1">Glutamyl-tRNA reductase</fullName>
        <shortName evidence="1">GluTR</shortName>
        <ecNumber evidence="1">1.2.1.70</ecNumber>
    </recommendedName>
</protein>
<sequence>MHYLNISFSHKNSTLDVREKLSYKDDYATKGCLSKLNSGESINESILISTCNRMEVFCSCSDIASATKHIFEMLAARSGVSIDELEGRADIFDDSSAIHHLFSVASSLDSMVIGETQIAGQLKDAFRFSYDNGFCSQKLARAMHHAFKCAAKVRNATDISSKPVSIASVAVSKLKSVLDNVEGKKALVIGVGEMSEITAKHLLSSGADVYITNRTKHKAEKLASECGAKVLDMQDLHKAVNEFEILFTATSSSEPIITDEIIKPCDFDRYWFDMAVPRDINYHKGDRINLYVVDDLKNIVDQNMSFREDGARKAHGIIGRSTVEFFEWLNTLNIEPMIKEIYEKAFEAARIESQRVIKKGFIPKEYEDQIHKMSQQVLKRFLHQMSSKMRSVSEESKADMLTSAVQFLIEKDQRDIPDKYKCEHALNIIEGR</sequence>
<organism>
    <name type="scientific">Sulfurimonas denitrificans (strain ATCC 33889 / DSM 1251)</name>
    <name type="common">Thiomicrospira denitrificans (strain ATCC 33889 / DSM 1251)</name>
    <dbReference type="NCBI Taxonomy" id="326298"/>
    <lineage>
        <taxon>Bacteria</taxon>
        <taxon>Pseudomonadati</taxon>
        <taxon>Campylobacterota</taxon>
        <taxon>Epsilonproteobacteria</taxon>
        <taxon>Campylobacterales</taxon>
        <taxon>Sulfurimonadaceae</taxon>
        <taxon>Sulfurimonas</taxon>
    </lineage>
</organism>